<organism>
    <name type="scientific">Prochlorothrix hollandica</name>
    <dbReference type="NCBI Taxonomy" id="1223"/>
    <lineage>
        <taxon>Bacteria</taxon>
        <taxon>Bacillati</taxon>
        <taxon>Cyanobacteriota</taxon>
        <taxon>Cyanophyceae</taxon>
        <taxon>Prochlorotrichales</taxon>
        <taxon>Prochlorotrichaceae</taxon>
        <taxon>Prochlorothrix</taxon>
    </lineage>
</organism>
<dbReference type="EMBL" id="X97043">
    <property type="protein sequence ID" value="CAA65758.1"/>
    <property type="molecule type" value="Genomic_DNA"/>
</dbReference>
<dbReference type="RefSeq" id="WP_017711819.1">
    <property type="nucleotide sequence ID" value="NZ_JBEIME010000002.1"/>
</dbReference>
<dbReference type="SMR" id="P95504"/>
<dbReference type="GO" id="GO:0009522">
    <property type="term" value="C:photosystem I"/>
    <property type="evidence" value="ECO:0007669"/>
    <property type="project" value="UniProtKB-KW"/>
</dbReference>
<dbReference type="GO" id="GO:0009523">
    <property type="term" value="C:photosystem II"/>
    <property type="evidence" value="ECO:0007669"/>
    <property type="project" value="UniProtKB-KW"/>
</dbReference>
<dbReference type="GO" id="GO:0031676">
    <property type="term" value="C:plasma membrane-derived thylakoid membrane"/>
    <property type="evidence" value="ECO:0007669"/>
    <property type="project" value="UniProtKB-SubCell"/>
</dbReference>
<dbReference type="GO" id="GO:0016168">
    <property type="term" value="F:chlorophyll binding"/>
    <property type="evidence" value="ECO:0007669"/>
    <property type="project" value="UniProtKB-KW"/>
</dbReference>
<dbReference type="GO" id="GO:0009767">
    <property type="term" value="P:photosynthetic electron transport chain"/>
    <property type="evidence" value="ECO:0007669"/>
    <property type="project" value="InterPro"/>
</dbReference>
<dbReference type="InterPro" id="IPR000932">
    <property type="entry name" value="PS_antenna-like"/>
</dbReference>
<dbReference type="InterPro" id="IPR036001">
    <property type="entry name" value="PS_II_antenna-like_sf"/>
</dbReference>
<dbReference type="NCBIfam" id="TIGR03041">
    <property type="entry name" value="PS_antenn_a_b"/>
    <property type="match status" value="1"/>
</dbReference>
<dbReference type="Pfam" id="PF00421">
    <property type="entry name" value="PSII"/>
    <property type="match status" value="1"/>
</dbReference>
<dbReference type="SUPFAM" id="SSF161077">
    <property type="entry name" value="Photosystem II antenna protein-like"/>
    <property type="match status" value="1"/>
</dbReference>
<gene>
    <name type="primary">pcbB</name>
</gene>
<evidence type="ECO:0000250" key="1">
    <source>
        <dbReference type="UniProtKB" id="Q6Q972"/>
    </source>
</evidence>
<evidence type="ECO:0000255" key="2"/>
<evidence type="ECO:0000303" key="3">
    <source>
    </source>
</evidence>
<evidence type="ECO:0000305" key="4"/>
<reference key="1">
    <citation type="journal article" date="1996" name="Proc. Natl. Acad. Sci. U.S.A.">
        <title>Independent evolution of the prochlorophyte and green plant chlorophyll a/b light-harvesting proteins.</title>
        <authorList>
            <person name="La Roche J."/>
            <person name="van der Staay G.W.M."/>
            <person name="Partensky F."/>
            <person name="Ducret A."/>
            <person name="Aebersold R.R."/>
            <person name="Li R."/>
            <person name="Golden S.S."/>
            <person name="Hiller R.G."/>
            <person name="Wrench P.M."/>
            <person name="Larkum A.W.D."/>
            <person name="Green B.R."/>
        </authorList>
    </citation>
    <scope>NUCLEOTIDE SEQUENCE [GENOMIC DNA]</scope>
    <scope>FUNCTION</scope>
</reference>
<reference key="2">
    <citation type="journal article" date="1998" name="Plant Mol. Biol.">
        <title>The 38 kDa chlorophyll a/b protein of the prokaryote Prochlorothrix hollandica is encoded by a divergent pcb gene.</title>
        <authorList>
            <person name="van der Staay G.W.M."/>
            <person name="Yurkova N."/>
            <person name="Green B.R."/>
        </authorList>
    </citation>
    <scope>NUCLEOTIDE SEQUENCE [GENOMIC DNA]</scope>
</reference>
<reference key="3">
    <citation type="book" date="1995" name="Photosynthesis from light to biosphere">
        <title>The Chl a/b antenna from prochlorophytes is related to the iron stress-induced Chl a antenna from cyanobacteria.</title>
        <editorList>
            <person name="Mathis P."/>
        </editorList>
        <authorList>
            <person name="van der Staay G.W.M."/>
            <person name="Ducret A."/>
            <person name="Aebersold R.R."/>
            <person name="Li R."/>
            <person name="Golden S.S."/>
            <person name="Hiller R.G."/>
            <person name="Wrench P.M."/>
            <person name="Larkum A.W.D."/>
            <person name="Green B.R."/>
        </authorList>
    </citation>
    <scope>NUCLEOTIDE SEQUENCE [GENOMIC DNA]</scope>
</reference>
<keyword id="KW-0148">Chlorophyll</keyword>
<keyword id="KW-0157">Chromophore</keyword>
<keyword id="KW-0472">Membrane</keyword>
<keyword id="KW-0602">Photosynthesis</keyword>
<keyword id="KW-0603">Photosystem I</keyword>
<keyword id="KW-0604">Photosystem II</keyword>
<keyword id="KW-0793">Thylakoid</keyword>
<keyword id="KW-0812">Transmembrane</keyword>
<keyword id="KW-1133">Transmembrane helix</keyword>
<protein>
    <recommendedName>
        <fullName>Chlorophyll a/b light-harvesting protein PcbB</fullName>
    </recommendedName>
</protein>
<accession>P95504</accession>
<name>PCBB_PROHO</name>
<feature type="chain" id="PRO_0000077536" description="Chlorophyll a/b light-harvesting protein PcbB">
    <location>
        <begin position="1"/>
        <end position="347"/>
    </location>
</feature>
<feature type="transmembrane region" description="Helical" evidence="2">
    <location>
        <begin position="25"/>
        <end position="45"/>
    </location>
</feature>
<feature type="transmembrane region" description="Helical" evidence="2">
    <location>
        <begin position="64"/>
        <end position="84"/>
    </location>
</feature>
<feature type="transmembrane region" description="Helical" evidence="2">
    <location>
        <begin position="91"/>
        <end position="111"/>
    </location>
</feature>
<feature type="transmembrane region" description="Helical" evidence="2">
    <location>
        <begin position="206"/>
        <end position="226"/>
    </location>
</feature>
<feature type="transmembrane region" description="Helical" evidence="2">
    <location>
        <begin position="247"/>
        <end position="267"/>
    </location>
</feature>
<feature type="transmembrane region" description="Helical" evidence="2">
    <location>
        <begin position="308"/>
        <end position="328"/>
    </location>
</feature>
<sequence>MQTYGSRNVDYGWWAGNSRFADRTGLWLAAHVAQASFIVLWAGAITLFEVARYTPSIPMGEQGLILIPHLAALGIGVGAGGVVVNTFPYTAIGAVHLISSFVFAFGAIFHVRFGPESIGEGSDSKFAFSWDDPKQLGLILGHHLLLLGLGAIFFVGWIRFHGVYDSTIGDVRIVSNPGATILSVIFEYGWFTPEHNPFFVNNLEDLASGHAFIGVVLLSGGVWHITQEPFAWAQRLLASLFSAEGLLSSALAGLSMLGFAAAYFSAVNTLAYPIEFFGPPLELQFNIMPYFVDSVDLPAGVYSARAWLCNVHFYLAFFVLQGHLWHAIRAIGFDFKKVSNAFATLSN</sequence>
<proteinExistence type="inferred from homology"/>
<comment type="function">
    <text evidence="1 3">The antenna complex functions as a light receptor, it captures and delivers excitation energy to photosystems II and I. The Prochlorales pcb genes are not related to higher plant LHCs.</text>
</comment>
<comment type="cofactor">
    <cofactor evidence="1">
        <name>chlorophyll a</name>
        <dbReference type="ChEBI" id="CHEBI:58416"/>
    </cofactor>
    <text evidence="1">Chlorophyll a.</text>
</comment>
<comment type="cofactor">
    <cofactor evidence="1">
        <name>chlorophyll b</name>
        <dbReference type="ChEBI" id="CHEBI:61721"/>
    </cofactor>
    <text evidence="1">Chlorophyll b.</text>
</comment>
<comment type="subunit">
    <text evidence="1">The antenna complex consists of chlorophylls (a and b) and chlorophyll a/b binding proteins.</text>
</comment>
<comment type="subcellular location">
    <subcellularLocation>
        <location evidence="1">Cellular thylakoid membrane</location>
        <topology evidence="1">Multi-pass membrane protein</topology>
    </subcellularLocation>
</comment>
<comment type="similarity">
    <text evidence="4">Belongs to the PsbB/PsbC family. IsiA/Pcb subfamily.</text>
</comment>